<proteinExistence type="inferred from homology"/>
<dbReference type="EC" id="6.3.5.7" evidence="1"/>
<dbReference type="EMBL" id="CP000878">
    <property type="protein sequence ID" value="ABX08629.1"/>
    <property type="molecule type" value="Genomic_DNA"/>
</dbReference>
<dbReference type="RefSeq" id="WP_012195251.1">
    <property type="nucleotide sequence ID" value="NC_009976.1"/>
</dbReference>
<dbReference type="SMR" id="A9B9W7"/>
<dbReference type="STRING" id="93059.P9211_06981"/>
<dbReference type="KEGG" id="pmj:P9211_06981"/>
<dbReference type="eggNOG" id="COG0154">
    <property type="taxonomic scope" value="Bacteria"/>
</dbReference>
<dbReference type="HOGENOM" id="CLU_009600_0_3_3"/>
<dbReference type="OrthoDB" id="9811471at2"/>
<dbReference type="Proteomes" id="UP000000788">
    <property type="component" value="Chromosome"/>
</dbReference>
<dbReference type="GO" id="GO:0030956">
    <property type="term" value="C:glutamyl-tRNA(Gln) amidotransferase complex"/>
    <property type="evidence" value="ECO:0007669"/>
    <property type="project" value="InterPro"/>
</dbReference>
<dbReference type="GO" id="GO:0005524">
    <property type="term" value="F:ATP binding"/>
    <property type="evidence" value="ECO:0007669"/>
    <property type="project" value="UniProtKB-KW"/>
</dbReference>
<dbReference type="GO" id="GO:0050567">
    <property type="term" value="F:glutaminyl-tRNA synthase (glutamine-hydrolyzing) activity"/>
    <property type="evidence" value="ECO:0007669"/>
    <property type="project" value="UniProtKB-UniRule"/>
</dbReference>
<dbReference type="GO" id="GO:0006412">
    <property type="term" value="P:translation"/>
    <property type="evidence" value="ECO:0007669"/>
    <property type="project" value="UniProtKB-UniRule"/>
</dbReference>
<dbReference type="Gene3D" id="3.90.1300.10">
    <property type="entry name" value="Amidase signature (AS) domain"/>
    <property type="match status" value="1"/>
</dbReference>
<dbReference type="HAMAP" id="MF_00120">
    <property type="entry name" value="GatA"/>
    <property type="match status" value="1"/>
</dbReference>
<dbReference type="InterPro" id="IPR000120">
    <property type="entry name" value="Amidase"/>
</dbReference>
<dbReference type="InterPro" id="IPR020556">
    <property type="entry name" value="Amidase_CS"/>
</dbReference>
<dbReference type="InterPro" id="IPR023631">
    <property type="entry name" value="Amidase_dom"/>
</dbReference>
<dbReference type="InterPro" id="IPR036928">
    <property type="entry name" value="AS_sf"/>
</dbReference>
<dbReference type="InterPro" id="IPR004412">
    <property type="entry name" value="GatA"/>
</dbReference>
<dbReference type="NCBIfam" id="TIGR00132">
    <property type="entry name" value="gatA"/>
    <property type="match status" value="1"/>
</dbReference>
<dbReference type="PANTHER" id="PTHR11895:SF151">
    <property type="entry name" value="GLUTAMYL-TRNA(GLN) AMIDOTRANSFERASE SUBUNIT A"/>
    <property type="match status" value="1"/>
</dbReference>
<dbReference type="PANTHER" id="PTHR11895">
    <property type="entry name" value="TRANSAMIDASE"/>
    <property type="match status" value="1"/>
</dbReference>
<dbReference type="Pfam" id="PF01425">
    <property type="entry name" value="Amidase"/>
    <property type="match status" value="1"/>
</dbReference>
<dbReference type="SUPFAM" id="SSF75304">
    <property type="entry name" value="Amidase signature (AS) enzymes"/>
    <property type="match status" value="1"/>
</dbReference>
<dbReference type="PROSITE" id="PS00571">
    <property type="entry name" value="AMIDASES"/>
    <property type="match status" value="1"/>
</dbReference>
<reference key="1">
    <citation type="journal article" date="2007" name="PLoS Genet.">
        <title>Patterns and implications of gene gain and loss in the evolution of Prochlorococcus.</title>
        <authorList>
            <person name="Kettler G.C."/>
            <person name="Martiny A.C."/>
            <person name="Huang K."/>
            <person name="Zucker J."/>
            <person name="Coleman M.L."/>
            <person name="Rodrigue S."/>
            <person name="Chen F."/>
            <person name="Lapidus A."/>
            <person name="Ferriera S."/>
            <person name="Johnson J."/>
            <person name="Steglich C."/>
            <person name="Church G.M."/>
            <person name="Richardson P."/>
            <person name="Chisholm S.W."/>
        </authorList>
    </citation>
    <scope>NUCLEOTIDE SEQUENCE [LARGE SCALE GENOMIC DNA]</scope>
    <source>
        <strain>MIT 9211</strain>
    </source>
</reference>
<keyword id="KW-0067">ATP-binding</keyword>
<keyword id="KW-0436">Ligase</keyword>
<keyword id="KW-0547">Nucleotide-binding</keyword>
<keyword id="KW-0648">Protein biosynthesis</keyword>
<keyword id="KW-1185">Reference proteome</keyword>
<comment type="function">
    <text evidence="1">Allows the formation of correctly charged Gln-tRNA(Gln) through the transamidation of misacylated Glu-tRNA(Gln) in organisms which lack glutaminyl-tRNA synthetase. The reaction takes place in the presence of glutamine and ATP through an activated gamma-phospho-Glu-tRNA(Gln).</text>
</comment>
<comment type="catalytic activity">
    <reaction evidence="1">
        <text>L-glutamyl-tRNA(Gln) + L-glutamine + ATP + H2O = L-glutaminyl-tRNA(Gln) + L-glutamate + ADP + phosphate + H(+)</text>
        <dbReference type="Rhea" id="RHEA:17521"/>
        <dbReference type="Rhea" id="RHEA-COMP:9681"/>
        <dbReference type="Rhea" id="RHEA-COMP:9684"/>
        <dbReference type="ChEBI" id="CHEBI:15377"/>
        <dbReference type="ChEBI" id="CHEBI:15378"/>
        <dbReference type="ChEBI" id="CHEBI:29985"/>
        <dbReference type="ChEBI" id="CHEBI:30616"/>
        <dbReference type="ChEBI" id="CHEBI:43474"/>
        <dbReference type="ChEBI" id="CHEBI:58359"/>
        <dbReference type="ChEBI" id="CHEBI:78520"/>
        <dbReference type="ChEBI" id="CHEBI:78521"/>
        <dbReference type="ChEBI" id="CHEBI:456216"/>
        <dbReference type="EC" id="6.3.5.7"/>
    </reaction>
</comment>
<comment type="subunit">
    <text evidence="1">Heterotrimer of A, B and C subunits.</text>
</comment>
<comment type="similarity">
    <text evidence="1">Belongs to the amidase family. GatA subfamily.</text>
</comment>
<organism>
    <name type="scientific">Prochlorococcus marinus (strain MIT 9211)</name>
    <dbReference type="NCBI Taxonomy" id="93059"/>
    <lineage>
        <taxon>Bacteria</taxon>
        <taxon>Bacillati</taxon>
        <taxon>Cyanobacteriota</taxon>
        <taxon>Cyanophyceae</taxon>
        <taxon>Synechococcales</taxon>
        <taxon>Prochlorococcaceae</taxon>
        <taxon>Prochlorococcus</taxon>
    </lineage>
</organism>
<sequence length="487" mass="52354">MTIAEWRQRLNNREISSLELVNEQFARIKDVDNKLHAFLKLEEDSARENAKRIDEARLSGKELPPLAGIPFAIKDNLCTKGVKTTCSSKMLESFVPPYESTVTQRLWEAGAILLGKTNLDEFAMGSSTETSAFGATSNPWDLSRVPGGSSGGSAAAVASGLCLAALGSDTGGSIRQPASFCGVVGLKPTYGRVSRWGLVAFASSLDQVGPFTTSVEDAAEVLQVIAGKDPLDSTCLDKPVPNFSEYFSDSIKGLRIGLIKECFEQEGISLEVKESVLKAANQLQSLGAELIDVSCPRFNDGIATYYVIAPSEASANLARYDGVKYGYRQHGEENLSAMTSLSRAKGFGSEVQRRILIGTYALSAGYFDAYYKKAQKVRTLISRDFANSFEKVDLLLTPTSPSTAFKAGSHDNDPLAMYLSDLLTIPVNLAGLPAISVPCGFDKEGLPIGLQLIGDVLGEQRLLQVAHHYEQAANVMGNCPKGDLIPA</sequence>
<name>GATA_PROM4</name>
<gene>
    <name evidence="1" type="primary">gatA</name>
    <name type="ordered locus">P9211_06981</name>
</gene>
<feature type="chain" id="PRO_1000095161" description="Glutamyl-tRNA(Gln) amidotransferase subunit A">
    <location>
        <begin position="1"/>
        <end position="487"/>
    </location>
</feature>
<feature type="active site" description="Charge relay system" evidence="1">
    <location>
        <position position="74"/>
    </location>
</feature>
<feature type="active site" description="Charge relay system" evidence="1">
    <location>
        <position position="149"/>
    </location>
</feature>
<feature type="active site" description="Acyl-ester intermediate" evidence="1">
    <location>
        <position position="173"/>
    </location>
</feature>
<accession>A9B9W7</accession>
<protein>
    <recommendedName>
        <fullName evidence="1">Glutamyl-tRNA(Gln) amidotransferase subunit A</fullName>
        <shortName evidence="1">Glu-ADT subunit A</shortName>
        <ecNumber evidence="1">6.3.5.7</ecNumber>
    </recommendedName>
</protein>
<evidence type="ECO:0000255" key="1">
    <source>
        <dbReference type="HAMAP-Rule" id="MF_00120"/>
    </source>
</evidence>